<evidence type="ECO:0000250" key="1">
    <source>
        <dbReference type="UniProtKB" id="B8M9J8"/>
    </source>
</evidence>
<evidence type="ECO:0000255" key="2"/>
<evidence type="ECO:0000255" key="3">
    <source>
        <dbReference type="PROSITE-ProRule" id="PRU00498"/>
    </source>
</evidence>
<evidence type="ECO:0000269" key="4">
    <source>
    </source>
</evidence>
<evidence type="ECO:0000303" key="5">
    <source>
    </source>
</evidence>
<evidence type="ECO:0000305" key="6"/>
<evidence type="ECO:0000305" key="7">
    <source>
    </source>
</evidence>
<reference key="1">
    <citation type="journal article" date="2014" name="Nat. Commun.">
        <title>Multiple recent horizontal transfers of a large genomic region in cheese making fungi.</title>
        <authorList>
            <person name="Cheeseman K."/>
            <person name="Ropars J."/>
            <person name="Renault P."/>
            <person name="Dupont J."/>
            <person name="Gouzy J."/>
            <person name="Branca A."/>
            <person name="Abraham A.-L."/>
            <person name="Ceppi M."/>
            <person name="Conseiller E."/>
            <person name="Debuchy R."/>
            <person name="Malagnac F."/>
            <person name="Goarin A."/>
            <person name="Silar P."/>
            <person name="Lacoste S."/>
            <person name="Sallet E."/>
            <person name="Bensimon A."/>
            <person name="Giraud T."/>
            <person name="Brygoo Y."/>
        </authorList>
    </citation>
    <scope>NUCLEOTIDE SEQUENCE [LARGE SCALE GENOMIC DNA]</scope>
    <source>
        <strain>FM164</strain>
    </source>
</reference>
<reference key="2">
    <citation type="journal article" date="2022" name="Org. Lett.">
        <title>Biosynthesis of Annullatin D in Penicillium roqueforti Implies Oxidative Lactonization between Two Hydroxyl Groups Catalyzed by a BBE-like Enzyme.</title>
        <authorList>
            <person name="Xiang P."/>
            <person name="Kemmerich B."/>
            <person name="Yang L."/>
            <person name="Li S.M."/>
        </authorList>
    </citation>
    <scope>FUNCTION</scope>
    <scope>DISRUPTION PHENOTYPE</scope>
</reference>
<comment type="function">
    <text evidence="4 7">Highly reducing polyketide synthase; part of the gene cluster that mediates the biosynthesis of annullatin D, an alkylated aromatic polyketide with a fused dihydrobenzofuran lactone ring system that exhibits potent agonistic activities toward the cannabinoid receptors (PubMed:35939524). AnuJ does not seem to play a role within the pathway (PubMed:35939524). The annullatin backbone 2-hydroxymethyl-3-pentylphenol is assembled from one acetyl-CoA starter unit and 5 malonyl-CoA elongation units by cooperation of the highly reducing polyketide synthase anuA, the short-chain dehydrogenase anuB and the oxidoreductase anuC, before being hydroxylated at the C-5 alkyl chain by the cytochrome P450 monooxygenase anuE to form (8S)-annullatin E. The prenyltransferase anuH subsequently installs one isoprenyl group at the benzene ring to form (8S)-annullatin J. Enzymatic or nonenzymatic dihydro-benzofuran ring formation between the prenyl and the phenolic hydroxyl groups in (8S)-annullatin J results in two diastereomers (2S,9S)-annullatin H and compound 12. The intermediate (2S,9S)-annullatin H is then converted to (2S,9S)-annullatin D by the FAD-linked oxidoreductase anuG-catalyzed five-member lactone ring formation. The isomer 12 acts as a substrate for the short-chain dehydrogenase anuF and is oxidized to (2R)-annullatin F, which is subsequently acetylated by an acetyltransferase leading to (2R)-annullatin G formation. The remaining enzymes identified within the cluster, anuD, anuI and anuJ, seem not to be involved in annullatin biosynthesis (Probable).</text>
</comment>
<comment type="subcellular location">
    <subcellularLocation>
        <location evidence="2">Membrane</location>
        <topology evidence="2">Multi-pass membrane protein</topology>
    </subcellularLocation>
</comment>
<comment type="disruption phenotype">
    <text evidence="4">Does not affect the annullatin D biosynthesis pathway.</text>
</comment>
<comment type="similarity">
    <text evidence="6">Belongs to the paxM FAD-dependent monooxygenase family.</text>
</comment>
<name>ANUJ_PENRF</name>
<feature type="chain" id="PRO_0000458210" description="FAD-dependent monooxygenase anuJ">
    <location>
        <begin position="1"/>
        <end position="818"/>
    </location>
</feature>
<feature type="transmembrane region" description="Helical" evidence="2">
    <location>
        <begin position="471"/>
        <end position="491"/>
    </location>
</feature>
<feature type="transmembrane region" description="Helical" evidence="2">
    <location>
        <begin position="539"/>
        <end position="559"/>
    </location>
</feature>
<feature type="transmembrane region" description="Helical" evidence="2">
    <location>
        <begin position="571"/>
        <end position="591"/>
    </location>
</feature>
<feature type="transmembrane region" description="Helical" evidence="2">
    <location>
        <begin position="621"/>
        <end position="641"/>
    </location>
</feature>
<feature type="transmembrane region" description="Helical" evidence="2">
    <location>
        <begin position="647"/>
        <end position="667"/>
    </location>
</feature>
<feature type="transmembrane region" description="Helical" evidence="2">
    <location>
        <begin position="743"/>
        <end position="763"/>
    </location>
</feature>
<feature type="transmembrane region" description="Helical" evidence="2">
    <location>
        <begin position="778"/>
        <end position="798"/>
    </location>
</feature>
<feature type="binding site" evidence="1">
    <location>
        <position position="46"/>
    </location>
    <ligand>
        <name>FAD</name>
        <dbReference type="ChEBI" id="CHEBI:57692"/>
    </ligand>
</feature>
<feature type="binding site" evidence="1">
    <location>
        <position position="60"/>
    </location>
    <ligand>
        <name>FAD</name>
        <dbReference type="ChEBI" id="CHEBI:57692"/>
    </ligand>
</feature>
<feature type="binding site" evidence="1">
    <location>
        <position position="122"/>
    </location>
    <ligand>
        <name>FAD</name>
        <dbReference type="ChEBI" id="CHEBI:57692"/>
    </ligand>
</feature>
<feature type="binding site" evidence="1">
    <location>
        <position position="329"/>
    </location>
    <ligand>
        <name>FAD</name>
        <dbReference type="ChEBI" id="CHEBI:57692"/>
    </ligand>
</feature>
<feature type="binding site" evidence="1">
    <location>
        <position position="342"/>
    </location>
    <ligand>
        <name>FAD</name>
        <dbReference type="ChEBI" id="CHEBI:57692"/>
    </ligand>
</feature>
<feature type="glycosylation site" description="N-linked (GlcNAc...) asparagine" evidence="3">
    <location>
        <position position="614"/>
    </location>
</feature>
<feature type="glycosylation site" description="N-linked (GlcNAc...) asparagine" evidence="3">
    <location>
        <position position="683"/>
    </location>
</feature>
<accession>W6QJR3</accession>
<sequence>MLHSPPPFADGLRPLKVIIIGGGIAGLSLANAFEKAPVPIEYVILEARDTIAPQVGAGIALAPSGCRILDQLGVYDDLEQLVHPVQSSGVCDGQGKSLLPERSDTALLVTARMSYPLGWVERRSVLQVLFKHICHKKSVLTSKRMDRIEHSREQEKPIKVICTDGSFYEGDLVVGADGVHSKTRSEMWRVVEQNICDDFDVQQERRAMMAEYQCMFGISSPIPGLDAGMTDDTLARDVSMVVASGKDGKIFWFLFKRMPQVYHSHEIPRFDSADALKFAEQYFDFPVQSGASNIKFSDLWERRETATLVPLEEADFAHWTAGRIVCLGDSAHKMTPHTGTGGMLALEHAAVLANIICRLVAQGNKLPLTTSQIGTALSQYDEKRRHRRTSAKIKSTGASARMQTLQSLADRLVVRFLLPYAGDIRADQFCDDAIGAEHIEYMPVPARSMTGLMPFNPNRGIGMHESIWPRVLWALPLLGMAVAGLLTMFSVAPFEDAYDFLARRRYREVEIRDKFYHSGLLDDFSRSGVLRFIVSEAHFFYQPFSFFADYGVWYGIMLVESARRANRLNVLSFALLWGMLNMWGIAIFVPIYYFAYYILTPISTFDASDRRLTNLSYTKTILPVLLATHYATFMDAYLSPVRSHRQAAGFLWELFPVWLSLAQAGLARKFLQPSTLKQDRLNNVTRDLPTIRTTILGLCAVSTAVWQYTVWCSEDSLVNIFIPILSSAQGQTFEQLFAEFLKWDQVFFAIPNLFWIILLFADLRAAGLIHAGWLKISFSALGLIIAGGNGTMLGLMWLYREEVLATRRDRGAVVRPIA</sequence>
<gene>
    <name evidence="5" type="primary">anuJ</name>
    <name type="ORF">PROQFM164_S03g001183</name>
</gene>
<keyword id="KW-0274">FAD</keyword>
<keyword id="KW-0285">Flavoprotein</keyword>
<keyword id="KW-0325">Glycoprotein</keyword>
<keyword id="KW-0472">Membrane</keyword>
<keyword id="KW-0560">Oxidoreductase</keyword>
<keyword id="KW-1185">Reference proteome</keyword>
<keyword id="KW-0812">Transmembrane</keyword>
<keyword id="KW-1133">Transmembrane helix</keyword>
<proteinExistence type="inferred from homology"/>
<protein>
    <recommendedName>
        <fullName evidence="5">FAD-dependent monooxygenase anuJ</fullName>
        <ecNumber evidence="7">1.-.-.-</ecNumber>
    </recommendedName>
    <alternativeName>
        <fullName evidence="5">Annullatin D biosynthesis cluster protein J</fullName>
    </alternativeName>
</protein>
<dbReference type="EC" id="1.-.-.-" evidence="7"/>
<dbReference type="EMBL" id="HG792017">
    <property type="protein sequence ID" value="CDM34459.1"/>
    <property type="molecule type" value="Genomic_DNA"/>
</dbReference>
<dbReference type="SMR" id="W6QJR3"/>
<dbReference type="STRING" id="1365484.W6QJR3"/>
<dbReference type="OMA" id="YYALEHI"/>
<dbReference type="OrthoDB" id="10029326at2759"/>
<dbReference type="Proteomes" id="UP000030686">
    <property type="component" value="Unassembled WGS sequence"/>
</dbReference>
<dbReference type="GO" id="GO:0016020">
    <property type="term" value="C:membrane"/>
    <property type="evidence" value="ECO:0007669"/>
    <property type="project" value="UniProtKB-SubCell"/>
</dbReference>
<dbReference type="GO" id="GO:0071949">
    <property type="term" value="F:FAD binding"/>
    <property type="evidence" value="ECO:0007669"/>
    <property type="project" value="InterPro"/>
</dbReference>
<dbReference type="GO" id="GO:0004497">
    <property type="term" value="F:monooxygenase activity"/>
    <property type="evidence" value="ECO:0007669"/>
    <property type="project" value="InterPro"/>
</dbReference>
<dbReference type="Gene3D" id="3.50.50.60">
    <property type="entry name" value="FAD/NAD(P)-binding domain"/>
    <property type="match status" value="1"/>
</dbReference>
<dbReference type="InterPro" id="IPR002938">
    <property type="entry name" value="FAD-bd"/>
</dbReference>
<dbReference type="InterPro" id="IPR036188">
    <property type="entry name" value="FAD/NAD-bd_sf"/>
</dbReference>
<dbReference type="InterPro" id="IPR050562">
    <property type="entry name" value="FAD_mOase_fung"/>
</dbReference>
<dbReference type="PANTHER" id="PTHR47356:SF2">
    <property type="entry name" value="FAD-BINDING DOMAIN-CONTAINING PROTEIN-RELATED"/>
    <property type="match status" value="1"/>
</dbReference>
<dbReference type="PANTHER" id="PTHR47356">
    <property type="entry name" value="FAD-DEPENDENT MONOOXYGENASE ASQG-RELATED"/>
    <property type="match status" value="1"/>
</dbReference>
<dbReference type="Pfam" id="PF01494">
    <property type="entry name" value="FAD_binding_3"/>
    <property type="match status" value="2"/>
</dbReference>
<dbReference type="PRINTS" id="PR00420">
    <property type="entry name" value="RNGMNOXGNASE"/>
</dbReference>
<dbReference type="SUPFAM" id="SSF51905">
    <property type="entry name" value="FAD/NAD(P)-binding domain"/>
    <property type="match status" value="1"/>
</dbReference>
<organism>
    <name type="scientific">Penicillium roqueforti (strain FM164)</name>
    <dbReference type="NCBI Taxonomy" id="1365484"/>
    <lineage>
        <taxon>Eukaryota</taxon>
        <taxon>Fungi</taxon>
        <taxon>Dikarya</taxon>
        <taxon>Ascomycota</taxon>
        <taxon>Pezizomycotina</taxon>
        <taxon>Eurotiomycetes</taxon>
        <taxon>Eurotiomycetidae</taxon>
        <taxon>Eurotiales</taxon>
        <taxon>Aspergillaceae</taxon>
        <taxon>Penicillium</taxon>
    </lineage>
</organism>